<proteinExistence type="inferred from homology"/>
<evidence type="ECO:0000255" key="1">
    <source>
        <dbReference type="HAMAP-Rule" id="MF_00041"/>
    </source>
</evidence>
<sequence>MILKLYNTRTRDFSELTNFENVKVYACGPTVYNYAHIGNFRTYVFGDLLIKTLRFLGYKVNYAMNITDIGHLTGDLDDGEDKVAKTAREKGLTVYEISEFFTEAFFNDCRKLNIVYPDKVLVASKHIPIMIEVVKILEEKKITYFSNGNVYFDTSCFKSYGEMAGIDLIDKDMTLPRVDVDKFKRNKTDFVLWFTNSKFKDQEMKWDSPWGFGYPSWHLECAAMNLEYFKDTLDIHLGGVDHIGVHHINEIAIAECFLDNKWCDVFVHGEFLIMDYNKMSKSRGNFITVKDLEDQNFSPLDFRYLCLTSHYRNQLKFSLDNLQASKIARENLINKLSYFYESLDPVDLNTLNKDLKNFGFSVEKEYYDSFVEKISFDLNVAQGLALLWEIIKSENLSFVSKLRLAFIFDEIMSLNLREEILKNLQNHDVVIDENMKALIEERRIAKCEKNFKRADEIRDFFAKKGFVLVDTKEGTKVKRG</sequence>
<name>SYC_BORBZ</name>
<protein>
    <recommendedName>
        <fullName evidence="1">Cysteine--tRNA ligase</fullName>
        <ecNumber evidence="1">6.1.1.16</ecNumber>
    </recommendedName>
    <alternativeName>
        <fullName evidence="1">Cysteinyl-tRNA synthetase</fullName>
        <shortName evidence="1">CysRS</shortName>
    </alternativeName>
</protein>
<organism>
    <name type="scientific">Borreliella burgdorferi (strain ZS7)</name>
    <name type="common">Borrelia burgdorferi</name>
    <dbReference type="NCBI Taxonomy" id="445985"/>
    <lineage>
        <taxon>Bacteria</taxon>
        <taxon>Pseudomonadati</taxon>
        <taxon>Spirochaetota</taxon>
        <taxon>Spirochaetia</taxon>
        <taxon>Spirochaetales</taxon>
        <taxon>Borreliaceae</taxon>
        <taxon>Borreliella</taxon>
    </lineage>
</organism>
<accession>B7J2G1</accession>
<feature type="chain" id="PRO_1000199042" description="Cysteine--tRNA ligase">
    <location>
        <begin position="1"/>
        <end position="480"/>
    </location>
</feature>
<feature type="short sequence motif" description="'HIGH' region">
    <location>
        <begin position="29"/>
        <end position="39"/>
    </location>
</feature>
<feature type="short sequence motif" description="'KMSKS' region">
    <location>
        <begin position="278"/>
        <end position="282"/>
    </location>
</feature>
<feature type="binding site" evidence="1">
    <location>
        <position position="27"/>
    </location>
    <ligand>
        <name>Zn(2+)</name>
        <dbReference type="ChEBI" id="CHEBI:29105"/>
    </ligand>
</feature>
<feature type="binding site" evidence="1">
    <location>
        <position position="221"/>
    </location>
    <ligand>
        <name>Zn(2+)</name>
        <dbReference type="ChEBI" id="CHEBI:29105"/>
    </ligand>
</feature>
<feature type="binding site" evidence="1">
    <location>
        <position position="246"/>
    </location>
    <ligand>
        <name>Zn(2+)</name>
        <dbReference type="ChEBI" id="CHEBI:29105"/>
    </ligand>
</feature>
<feature type="binding site" evidence="1">
    <location>
        <position position="250"/>
    </location>
    <ligand>
        <name>Zn(2+)</name>
        <dbReference type="ChEBI" id="CHEBI:29105"/>
    </ligand>
</feature>
<feature type="binding site" evidence="1">
    <location>
        <position position="281"/>
    </location>
    <ligand>
        <name>ATP</name>
        <dbReference type="ChEBI" id="CHEBI:30616"/>
    </ligand>
</feature>
<gene>
    <name evidence="1" type="primary">cysS</name>
    <name type="ordered locus">BbuZS7_0613</name>
</gene>
<comment type="catalytic activity">
    <reaction evidence="1">
        <text>tRNA(Cys) + L-cysteine + ATP = L-cysteinyl-tRNA(Cys) + AMP + diphosphate</text>
        <dbReference type="Rhea" id="RHEA:17773"/>
        <dbReference type="Rhea" id="RHEA-COMP:9661"/>
        <dbReference type="Rhea" id="RHEA-COMP:9679"/>
        <dbReference type="ChEBI" id="CHEBI:30616"/>
        <dbReference type="ChEBI" id="CHEBI:33019"/>
        <dbReference type="ChEBI" id="CHEBI:35235"/>
        <dbReference type="ChEBI" id="CHEBI:78442"/>
        <dbReference type="ChEBI" id="CHEBI:78517"/>
        <dbReference type="ChEBI" id="CHEBI:456215"/>
        <dbReference type="EC" id="6.1.1.16"/>
    </reaction>
</comment>
<comment type="cofactor">
    <cofactor evidence="1">
        <name>Zn(2+)</name>
        <dbReference type="ChEBI" id="CHEBI:29105"/>
    </cofactor>
    <text evidence="1">Binds 1 zinc ion per subunit.</text>
</comment>
<comment type="subunit">
    <text evidence="1">Monomer.</text>
</comment>
<comment type="subcellular location">
    <subcellularLocation>
        <location evidence="1">Cytoplasm</location>
    </subcellularLocation>
</comment>
<comment type="similarity">
    <text evidence="1">Belongs to the class-I aminoacyl-tRNA synthetase family.</text>
</comment>
<dbReference type="EC" id="6.1.1.16" evidence="1"/>
<dbReference type="EMBL" id="CP001205">
    <property type="protein sequence ID" value="ACK74651.1"/>
    <property type="molecule type" value="Genomic_DNA"/>
</dbReference>
<dbReference type="RefSeq" id="WP_002658106.1">
    <property type="nucleotide sequence ID" value="NC_011728.1"/>
</dbReference>
<dbReference type="SMR" id="B7J2G1"/>
<dbReference type="KEGG" id="bbz:BbuZS7_0613"/>
<dbReference type="HOGENOM" id="CLU_013528_0_1_12"/>
<dbReference type="Proteomes" id="UP000006901">
    <property type="component" value="Chromosome"/>
</dbReference>
<dbReference type="GO" id="GO:0005829">
    <property type="term" value="C:cytosol"/>
    <property type="evidence" value="ECO:0007669"/>
    <property type="project" value="TreeGrafter"/>
</dbReference>
<dbReference type="GO" id="GO:0005524">
    <property type="term" value="F:ATP binding"/>
    <property type="evidence" value="ECO:0007669"/>
    <property type="project" value="UniProtKB-UniRule"/>
</dbReference>
<dbReference type="GO" id="GO:0004817">
    <property type="term" value="F:cysteine-tRNA ligase activity"/>
    <property type="evidence" value="ECO:0007669"/>
    <property type="project" value="UniProtKB-UniRule"/>
</dbReference>
<dbReference type="GO" id="GO:0008270">
    <property type="term" value="F:zinc ion binding"/>
    <property type="evidence" value="ECO:0007669"/>
    <property type="project" value="UniProtKB-UniRule"/>
</dbReference>
<dbReference type="GO" id="GO:0006423">
    <property type="term" value="P:cysteinyl-tRNA aminoacylation"/>
    <property type="evidence" value="ECO:0007669"/>
    <property type="project" value="UniProtKB-UniRule"/>
</dbReference>
<dbReference type="CDD" id="cd00672">
    <property type="entry name" value="CysRS_core"/>
    <property type="match status" value="1"/>
</dbReference>
<dbReference type="Gene3D" id="1.20.120.1910">
    <property type="entry name" value="Cysteine-tRNA ligase, C-terminal anti-codon recognition domain"/>
    <property type="match status" value="1"/>
</dbReference>
<dbReference type="Gene3D" id="3.40.50.620">
    <property type="entry name" value="HUPs"/>
    <property type="match status" value="1"/>
</dbReference>
<dbReference type="HAMAP" id="MF_00041">
    <property type="entry name" value="Cys_tRNA_synth"/>
    <property type="match status" value="1"/>
</dbReference>
<dbReference type="InterPro" id="IPR015803">
    <property type="entry name" value="Cys-tRNA-ligase"/>
</dbReference>
<dbReference type="InterPro" id="IPR024909">
    <property type="entry name" value="Cys-tRNA/MSH_ligase"/>
</dbReference>
<dbReference type="InterPro" id="IPR014729">
    <property type="entry name" value="Rossmann-like_a/b/a_fold"/>
</dbReference>
<dbReference type="InterPro" id="IPR032678">
    <property type="entry name" value="tRNA-synt_1_cat_dom"/>
</dbReference>
<dbReference type="InterPro" id="IPR009080">
    <property type="entry name" value="tRNAsynth_Ia_anticodon-bd"/>
</dbReference>
<dbReference type="NCBIfam" id="TIGR00435">
    <property type="entry name" value="cysS"/>
    <property type="match status" value="1"/>
</dbReference>
<dbReference type="NCBIfam" id="NF011107">
    <property type="entry name" value="PRK14534.1"/>
    <property type="match status" value="1"/>
</dbReference>
<dbReference type="PANTHER" id="PTHR10890:SF3">
    <property type="entry name" value="CYSTEINE--TRNA LIGASE, CYTOPLASMIC"/>
    <property type="match status" value="1"/>
</dbReference>
<dbReference type="PANTHER" id="PTHR10890">
    <property type="entry name" value="CYSTEINYL-TRNA SYNTHETASE"/>
    <property type="match status" value="1"/>
</dbReference>
<dbReference type="Pfam" id="PF01406">
    <property type="entry name" value="tRNA-synt_1e"/>
    <property type="match status" value="1"/>
</dbReference>
<dbReference type="PRINTS" id="PR00983">
    <property type="entry name" value="TRNASYNTHCYS"/>
</dbReference>
<dbReference type="SUPFAM" id="SSF47323">
    <property type="entry name" value="Anticodon-binding domain of a subclass of class I aminoacyl-tRNA synthetases"/>
    <property type="match status" value="1"/>
</dbReference>
<dbReference type="SUPFAM" id="SSF52374">
    <property type="entry name" value="Nucleotidylyl transferase"/>
    <property type="match status" value="1"/>
</dbReference>
<keyword id="KW-0030">Aminoacyl-tRNA synthetase</keyword>
<keyword id="KW-0067">ATP-binding</keyword>
<keyword id="KW-0963">Cytoplasm</keyword>
<keyword id="KW-0436">Ligase</keyword>
<keyword id="KW-0479">Metal-binding</keyword>
<keyword id="KW-0547">Nucleotide-binding</keyword>
<keyword id="KW-0648">Protein biosynthesis</keyword>
<keyword id="KW-0862">Zinc</keyword>
<reference key="1">
    <citation type="journal article" date="2011" name="J. Bacteriol.">
        <title>Whole-genome sequences of thirteen isolates of Borrelia burgdorferi.</title>
        <authorList>
            <person name="Schutzer S.E."/>
            <person name="Fraser-Liggett C.M."/>
            <person name="Casjens S.R."/>
            <person name="Qiu W.G."/>
            <person name="Dunn J.J."/>
            <person name="Mongodin E.F."/>
            <person name="Luft B.J."/>
        </authorList>
    </citation>
    <scope>NUCLEOTIDE SEQUENCE [LARGE SCALE GENOMIC DNA]</scope>
    <source>
        <strain>ZS7</strain>
    </source>
</reference>